<name>TATB_CUPMC</name>
<dbReference type="EMBL" id="CP000352">
    <property type="protein sequence ID" value="ABF10108.1"/>
    <property type="molecule type" value="Genomic_DNA"/>
</dbReference>
<dbReference type="RefSeq" id="WP_011517717.1">
    <property type="nucleotide sequence ID" value="NC_007973.1"/>
</dbReference>
<dbReference type="SMR" id="Q1LIB8"/>
<dbReference type="STRING" id="266264.Rmet_3236"/>
<dbReference type="KEGG" id="rme:Rmet_3236"/>
<dbReference type="eggNOG" id="COG1826">
    <property type="taxonomic scope" value="Bacteria"/>
</dbReference>
<dbReference type="HOGENOM" id="CLU_086034_1_1_4"/>
<dbReference type="Proteomes" id="UP000002429">
    <property type="component" value="Chromosome"/>
</dbReference>
<dbReference type="GO" id="GO:0033281">
    <property type="term" value="C:TAT protein transport complex"/>
    <property type="evidence" value="ECO:0007669"/>
    <property type="project" value="UniProtKB-UniRule"/>
</dbReference>
<dbReference type="GO" id="GO:0008320">
    <property type="term" value="F:protein transmembrane transporter activity"/>
    <property type="evidence" value="ECO:0007669"/>
    <property type="project" value="UniProtKB-UniRule"/>
</dbReference>
<dbReference type="GO" id="GO:0043953">
    <property type="term" value="P:protein transport by the Tat complex"/>
    <property type="evidence" value="ECO:0007669"/>
    <property type="project" value="UniProtKB-UniRule"/>
</dbReference>
<dbReference type="Gene3D" id="1.20.5.3310">
    <property type="match status" value="1"/>
</dbReference>
<dbReference type="HAMAP" id="MF_00237">
    <property type="entry name" value="TatB"/>
    <property type="match status" value="1"/>
</dbReference>
<dbReference type="InterPro" id="IPR003369">
    <property type="entry name" value="TatA/B/E"/>
</dbReference>
<dbReference type="InterPro" id="IPR018448">
    <property type="entry name" value="TatB"/>
</dbReference>
<dbReference type="NCBIfam" id="TIGR01410">
    <property type="entry name" value="tatB"/>
    <property type="match status" value="1"/>
</dbReference>
<dbReference type="PANTHER" id="PTHR33162">
    <property type="entry name" value="SEC-INDEPENDENT PROTEIN TRANSLOCASE PROTEIN TATA, CHLOROPLASTIC"/>
    <property type="match status" value="1"/>
</dbReference>
<dbReference type="PANTHER" id="PTHR33162:SF1">
    <property type="entry name" value="SEC-INDEPENDENT PROTEIN TRANSLOCASE PROTEIN TATA, CHLOROPLASTIC"/>
    <property type="match status" value="1"/>
</dbReference>
<dbReference type="Pfam" id="PF02416">
    <property type="entry name" value="TatA_B_E"/>
    <property type="match status" value="1"/>
</dbReference>
<dbReference type="PRINTS" id="PR01506">
    <property type="entry name" value="TATBPROTEIN"/>
</dbReference>
<feature type="chain" id="PRO_0000301218" description="Sec-independent protein translocase protein TatB">
    <location>
        <begin position="1"/>
        <end position="168"/>
    </location>
</feature>
<feature type="transmembrane region" description="Helical" evidence="1">
    <location>
        <begin position="1"/>
        <end position="21"/>
    </location>
</feature>
<feature type="region of interest" description="Disordered" evidence="2">
    <location>
        <begin position="92"/>
        <end position="132"/>
    </location>
</feature>
<feature type="region of interest" description="Disordered" evidence="2">
    <location>
        <begin position="146"/>
        <end position="168"/>
    </location>
</feature>
<feature type="compositionally biased region" description="Low complexity" evidence="2">
    <location>
        <begin position="94"/>
        <end position="107"/>
    </location>
</feature>
<feature type="compositionally biased region" description="Basic residues" evidence="2">
    <location>
        <begin position="117"/>
        <end position="126"/>
    </location>
</feature>
<comment type="function">
    <text evidence="1">Part of the twin-arginine translocation (Tat) system that transports large folded proteins containing a characteristic twin-arginine motif in their signal peptide across membranes. Together with TatC, TatB is part of a receptor directly interacting with Tat signal peptides. TatB may form an oligomeric binding site that transiently accommodates folded Tat precursor proteins before their translocation.</text>
</comment>
<comment type="subunit">
    <text evidence="1">The Tat system comprises two distinct complexes: a TatABC complex, containing multiple copies of TatA, TatB and TatC subunits, and a separate TatA complex, containing only TatA subunits. Substrates initially bind to the TatABC complex, which probably triggers association of the separate TatA complex to form the active translocon.</text>
</comment>
<comment type="subcellular location">
    <subcellularLocation>
        <location evidence="1">Cell inner membrane</location>
        <topology evidence="1">Single-pass membrane protein</topology>
    </subcellularLocation>
</comment>
<comment type="similarity">
    <text evidence="1">Belongs to the TatB family.</text>
</comment>
<accession>Q1LIB8</accession>
<sequence length="168" mass="18812">MIDLGISKLALIGAVALIVIGPERLPKVARTVGALVGRAQRYINDVKAEVSREVELEELRKMRTEFENAARDVEQTIHKEVSEHTQALNEAFDGSASSSSSSDTGSGYVPSWDSAHKSHNGRKSWRVKQGARPIWFKRQQNTRMWVQSGAARVKRHRPASGRNRSFFE</sequence>
<proteinExistence type="inferred from homology"/>
<organism>
    <name type="scientific">Cupriavidus metallidurans (strain ATCC 43123 / DSM 2839 / NBRC 102507 / CH34)</name>
    <name type="common">Ralstonia metallidurans</name>
    <dbReference type="NCBI Taxonomy" id="266264"/>
    <lineage>
        <taxon>Bacteria</taxon>
        <taxon>Pseudomonadati</taxon>
        <taxon>Pseudomonadota</taxon>
        <taxon>Betaproteobacteria</taxon>
        <taxon>Burkholderiales</taxon>
        <taxon>Burkholderiaceae</taxon>
        <taxon>Cupriavidus</taxon>
    </lineage>
</organism>
<evidence type="ECO:0000255" key="1">
    <source>
        <dbReference type="HAMAP-Rule" id="MF_00237"/>
    </source>
</evidence>
<evidence type="ECO:0000256" key="2">
    <source>
        <dbReference type="SAM" id="MobiDB-lite"/>
    </source>
</evidence>
<keyword id="KW-0997">Cell inner membrane</keyword>
<keyword id="KW-1003">Cell membrane</keyword>
<keyword id="KW-0472">Membrane</keyword>
<keyword id="KW-0653">Protein transport</keyword>
<keyword id="KW-1185">Reference proteome</keyword>
<keyword id="KW-0811">Translocation</keyword>
<keyword id="KW-0812">Transmembrane</keyword>
<keyword id="KW-1133">Transmembrane helix</keyword>
<keyword id="KW-0813">Transport</keyword>
<protein>
    <recommendedName>
        <fullName evidence="1">Sec-independent protein translocase protein TatB</fullName>
    </recommendedName>
</protein>
<gene>
    <name evidence="1" type="primary">tatB</name>
    <name type="ordered locus">Rmet_3236</name>
</gene>
<reference key="1">
    <citation type="journal article" date="2010" name="PLoS ONE">
        <title>The complete genome sequence of Cupriavidus metallidurans strain CH34, a master survivalist in harsh and anthropogenic environments.</title>
        <authorList>
            <person name="Janssen P.J."/>
            <person name="Van Houdt R."/>
            <person name="Moors H."/>
            <person name="Monsieurs P."/>
            <person name="Morin N."/>
            <person name="Michaux A."/>
            <person name="Benotmane M.A."/>
            <person name="Leys N."/>
            <person name="Vallaeys T."/>
            <person name="Lapidus A."/>
            <person name="Monchy S."/>
            <person name="Medigue C."/>
            <person name="Taghavi S."/>
            <person name="McCorkle S."/>
            <person name="Dunn J."/>
            <person name="van der Lelie D."/>
            <person name="Mergeay M."/>
        </authorList>
    </citation>
    <scope>NUCLEOTIDE SEQUENCE [LARGE SCALE GENOMIC DNA]</scope>
    <source>
        <strain>ATCC 43123 / DSM 2839 / NBRC 102507 / CH34</strain>
    </source>
</reference>